<keyword id="KW-0067">ATP-binding</keyword>
<keyword id="KW-0173">Coenzyme A biosynthesis</keyword>
<keyword id="KW-0963">Cytoplasm</keyword>
<keyword id="KW-0460">Magnesium</keyword>
<keyword id="KW-0547">Nucleotide-binding</keyword>
<keyword id="KW-0548">Nucleotidyltransferase</keyword>
<keyword id="KW-1185">Reference proteome</keyword>
<keyword id="KW-0808">Transferase</keyword>
<protein>
    <recommendedName>
        <fullName evidence="1">Phosphopantetheine adenylyltransferase</fullName>
        <ecNumber evidence="1">2.7.7.3</ecNumber>
    </recommendedName>
    <alternativeName>
        <fullName evidence="1">Dephospho-CoA pyrophosphorylase</fullName>
    </alternativeName>
    <alternativeName>
        <fullName evidence="1">Pantetheine-phosphate adenylyltransferase</fullName>
        <shortName evidence="1">PPAT</shortName>
    </alternativeName>
</protein>
<sequence>MTSVIYPGTFDPITNGHLDIIERSAVIFPRVLVAVANSPSKKPLFSLEERVELVRQSVVHLSNVEVFGFSDLLANVIKQHNISAIIRGVRTTTDFEYELQLAALNRLLTKGVDSLFFPPAEKWAFVSSTIVREIYLHGGDVAELVPVPVFNALKAR</sequence>
<reference key="1">
    <citation type="journal article" date="1995" name="Science">
        <title>Whole-genome random sequencing and assembly of Haemophilus influenzae Rd.</title>
        <authorList>
            <person name="Fleischmann R.D."/>
            <person name="Adams M.D."/>
            <person name="White O."/>
            <person name="Clayton R.A."/>
            <person name="Kirkness E.F."/>
            <person name="Kerlavage A.R."/>
            <person name="Bult C.J."/>
            <person name="Tomb J.-F."/>
            <person name="Dougherty B.A."/>
            <person name="Merrick J.M."/>
            <person name="McKenney K."/>
            <person name="Sutton G.G."/>
            <person name="FitzHugh W."/>
            <person name="Fields C.A."/>
            <person name="Gocayne J.D."/>
            <person name="Scott J.D."/>
            <person name="Shirley R."/>
            <person name="Liu L.-I."/>
            <person name="Glodek A."/>
            <person name="Kelley J.M."/>
            <person name="Weidman J.F."/>
            <person name="Phillips C.A."/>
            <person name="Spriggs T."/>
            <person name="Hedblom E."/>
            <person name="Cotton M.D."/>
            <person name="Utterback T.R."/>
            <person name="Hanna M.C."/>
            <person name="Nguyen D.T."/>
            <person name="Saudek D.M."/>
            <person name="Brandon R.C."/>
            <person name="Fine L.D."/>
            <person name="Fritchman J.L."/>
            <person name="Fuhrmann J.L."/>
            <person name="Geoghagen N.S.M."/>
            <person name="Gnehm C.L."/>
            <person name="McDonald L.A."/>
            <person name="Small K.V."/>
            <person name="Fraser C.M."/>
            <person name="Smith H.O."/>
            <person name="Venter J.C."/>
        </authorList>
    </citation>
    <scope>NUCLEOTIDE SEQUENCE [LARGE SCALE GENOMIC DNA]</scope>
    <source>
        <strain>ATCC 51907 / DSM 11121 / KW20 / Rd</strain>
    </source>
</reference>
<gene>
    <name evidence="1" type="primary">coaD</name>
    <name type="synonym">kdtB</name>
    <name type="ordered locus">HI_0651</name>
</gene>
<dbReference type="EC" id="2.7.7.3" evidence="1"/>
<dbReference type="EMBL" id="L42023">
    <property type="protein sequence ID" value="AAC22310.1"/>
    <property type="molecule type" value="Genomic_DNA"/>
</dbReference>
<dbReference type="PIR" id="E64084">
    <property type="entry name" value="E64084"/>
</dbReference>
<dbReference type="RefSeq" id="NP_438811.1">
    <property type="nucleotide sequence ID" value="NC_000907.1"/>
</dbReference>
<dbReference type="SMR" id="P44805"/>
<dbReference type="STRING" id="71421.HI_0651"/>
<dbReference type="EnsemblBacteria" id="AAC22310">
    <property type="protein sequence ID" value="AAC22310"/>
    <property type="gene ID" value="HI_0651"/>
</dbReference>
<dbReference type="KEGG" id="hin:HI_0651"/>
<dbReference type="PATRIC" id="fig|71421.8.peg.680"/>
<dbReference type="eggNOG" id="COG0669">
    <property type="taxonomic scope" value="Bacteria"/>
</dbReference>
<dbReference type="HOGENOM" id="CLU_100149_0_1_6"/>
<dbReference type="OrthoDB" id="9806661at2"/>
<dbReference type="PhylomeDB" id="P44805"/>
<dbReference type="BioCyc" id="HINF71421:G1GJ1-686-MONOMER"/>
<dbReference type="BRENDA" id="2.7.7.3">
    <property type="organism ID" value="2529"/>
</dbReference>
<dbReference type="UniPathway" id="UPA00241">
    <property type="reaction ID" value="UER00355"/>
</dbReference>
<dbReference type="Proteomes" id="UP000000579">
    <property type="component" value="Chromosome"/>
</dbReference>
<dbReference type="GO" id="GO:0005737">
    <property type="term" value="C:cytoplasm"/>
    <property type="evidence" value="ECO:0007669"/>
    <property type="project" value="UniProtKB-SubCell"/>
</dbReference>
<dbReference type="GO" id="GO:0005524">
    <property type="term" value="F:ATP binding"/>
    <property type="evidence" value="ECO:0007669"/>
    <property type="project" value="UniProtKB-KW"/>
</dbReference>
<dbReference type="GO" id="GO:0004595">
    <property type="term" value="F:pantetheine-phosphate adenylyltransferase activity"/>
    <property type="evidence" value="ECO:0000318"/>
    <property type="project" value="GO_Central"/>
</dbReference>
<dbReference type="GO" id="GO:0015937">
    <property type="term" value="P:coenzyme A biosynthetic process"/>
    <property type="evidence" value="ECO:0000318"/>
    <property type="project" value="GO_Central"/>
</dbReference>
<dbReference type="CDD" id="cd02163">
    <property type="entry name" value="PPAT"/>
    <property type="match status" value="1"/>
</dbReference>
<dbReference type="Gene3D" id="3.40.50.620">
    <property type="entry name" value="HUPs"/>
    <property type="match status" value="1"/>
</dbReference>
<dbReference type="HAMAP" id="MF_00151">
    <property type="entry name" value="PPAT_bact"/>
    <property type="match status" value="1"/>
</dbReference>
<dbReference type="InterPro" id="IPR004821">
    <property type="entry name" value="Cyt_trans-like"/>
</dbReference>
<dbReference type="InterPro" id="IPR001980">
    <property type="entry name" value="PPAT"/>
</dbReference>
<dbReference type="InterPro" id="IPR014729">
    <property type="entry name" value="Rossmann-like_a/b/a_fold"/>
</dbReference>
<dbReference type="NCBIfam" id="TIGR01510">
    <property type="entry name" value="coaD_prev_kdtB"/>
    <property type="match status" value="1"/>
</dbReference>
<dbReference type="NCBIfam" id="TIGR00125">
    <property type="entry name" value="cyt_tran_rel"/>
    <property type="match status" value="1"/>
</dbReference>
<dbReference type="PANTHER" id="PTHR21342">
    <property type="entry name" value="PHOSPHOPANTETHEINE ADENYLYLTRANSFERASE"/>
    <property type="match status" value="1"/>
</dbReference>
<dbReference type="PANTHER" id="PTHR21342:SF1">
    <property type="entry name" value="PHOSPHOPANTETHEINE ADENYLYLTRANSFERASE"/>
    <property type="match status" value="1"/>
</dbReference>
<dbReference type="Pfam" id="PF01467">
    <property type="entry name" value="CTP_transf_like"/>
    <property type="match status" value="1"/>
</dbReference>
<dbReference type="PRINTS" id="PR01020">
    <property type="entry name" value="LPSBIOSNTHSS"/>
</dbReference>
<dbReference type="SUPFAM" id="SSF52374">
    <property type="entry name" value="Nucleotidylyl transferase"/>
    <property type="match status" value="1"/>
</dbReference>
<evidence type="ECO:0000255" key="1">
    <source>
        <dbReference type="HAMAP-Rule" id="MF_00151"/>
    </source>
</evidence>
<organism>
    <name type="scientific">Haemophilus influenzae (strain ATCC 51907 / DSM 11121 / KW20 / Rd)</name>
    <dbReference type="NCBI Taxonomy" id="71421"/>
    <lineage>
        <taxon>Bacteria</taxon>
        <taxon>Pseudomonadati</taxon>
        <taxon>Pseudomonadota</taxon>
        <taxon>Gammaproteobacteria</taxon>
        <taxon>Pasteurellales</taxon>
        <taxon>Pasteurellaceae</taxon>
        <taxon>Haemophilus</taxon>
    </lineage>
</organism>
<name>COAD_HAEIN</name>
<proteinExistence type="inferred from homology"/>
<feature type="chain" id="PRO_0000156215" description="Phosphopantetheine adenylyltransferase">
    <location>
        <begin position="1"/>
        <end position="156"/>
    </location>
</feature>
<feature type="binding site" evidence="1">
    <location>
        <begin position="9"/>
        <end position="10"/>
    </location>
    <ligand>
        <name>ATP</name>
        <dbReference type="ChEBI" id="CHEBI:30616"/>
    </ligand>
</feature>
<feature type="binding site" evidence="1">
    <location>
        <position position="9"/>
    </location>
    <ligand>
        <name>substrate</name>
    </ligand>
</feature>
<feature type="binding site" evidence="1">
    <location>
        <position position="17"/>
    </location>
    <ligand>
        <name>ATP</name>
        <dbReference type="ChEBI" id="CHEBI:30616"/>
    </ligand>
</feature>
<feature type="binding site" evidence="1">
    <location>
        <position position="41"/>
    </location>
    <ligand>
        <name>substrate</name>
    </ligand>
</feature>
<feature type="binding site" evidence="1">
    <location>
        <position position="73"/>
    </location>
    <ligand>
        <name>substrate</name>
    </ligand>
</feature>
<feature type="binding site" evidence="1">
    <location>
        <position position="87"/>
    </location>
    <ligand>
        <name>substrate</name>
    </ligand>
</feature>
<feature type="binding site" evidence="1">
    <location>
        <begin position="88"/>
        <end position="90"/>
    </location>
    <ligand>
        <name>ATP</name>
        <dbReference type="ChEBI" id="CHEBI:30616"/>
    </ligand>
</feature>
<feature type="binding site" evidence="1">
    <location>
        <position position="98"/>
    </location>
    <ligand>
        <name>ATP</name>
        <dbReference type="ChEBI" id="CHEBI:30616"/>
    </ligand>
</feature>
<feature type="binding site" evidence="1">
    <location>
        <begin position="123"/>
        <end position="129"/>
    </location>
    <ligand>
        <name>ATP</name>
        <dbReference type="ChEBI" id="CHEBI:30616"/>
    </ligand>
</feature>
<feature type="site" description="Transition state stabilizer" evidence="1">
    <location>
        <position position="17"/>
    </location>
</feature>
<accession>P44805</accession>
<comment type="function">
    <text evidence="1">Reversibly transfers an adenylyl group from ATP to 4'-phosphopantetheine, yielding dephospho-CoA (dPCoA) and pyrophosphate.</text>
</comment>
<comment type="catalytic activity">
    <reaction evidence="1">
        <text>(R)-4'-phosphopantetheine + ATP + H(+) = 3'-dephospho-CoA + diphosphate</text>
        <dbReference type="Rhea" id="RHEA:19801"/>
        <dbReference type="ChEBI" id="CHEBI:15378"/>
        <dbReference type="ChEBI" id="CHEBI:30616"/>
        <dbReference type="ChEBI" id="CHEBI:33019"/>
        <dbReference type="ChEBI" id="CHEBI:57328"/>
        <dbReference type="ChEBI" id="CHEBI:61723"/>
        <dbReference type="EC" id="2.7.7.3"/>
    </reaction>
</comment>
<comment type="cofactor">
    <cofactor evidence="1">
        <name>Mg(2+)</name>
        <dbReference type="ChEBI" id="CHEBI:18420"/>
    </cofactor>
</comment>
<comment type="pathway">
    <text evidence="1">Cofactor biosynthesis; coenzyme A biosynthesis; CoA from (R)-pantothenate: step 4/5.</text>
</comment>
<comment type="subunit">
    <text evidence="1">Homohexamer.</text>
</comment>
<comment type="subcellular location">
    <subcellularLocation>
        <location evidence="1">Cytoplasm</location>
    </subcellularLocation>
</comment>
<comment type="similarity">
    <text evidence="1">Belongs to the bacterial CoaD family.</text>
</comment>